<proteinExistence type="evidence at protein level"/>
<name>RNFB_ACEWD</name>
<accession>H6LC27</accession>
<accession>C4N8U5</accession>
<dbReference type="EC" id="7.2.1.2" evidence="3 4"/>
<dbReference type="EMBL" id="FJ416148">
    <property type="protein sequence ID" value="ACR23747.1"/>
    <property type="molecule type" value="Genomic_DNA"/>
</dbReference>
<dbReference type="EMBL" id="CP002987">
    <property type="protein sequence ID" value="AFA48975.1"/>
    <property type="molecule type" value="Genomic_DNA"/>
</dbReference>
<dbReference type="RefSeq" id="WP_014356575.1">
    <property type="nucleotide sequence ID" value="NC_016894.1"/>
</dbReference>
<dbReference type="PDB" id="9ERI">
    <property type="method" value="EM"/>
    <property type="resolution" value="3.30 A"/>
    <property type="chains" value="B=1-333"/>
</dbReference>
<dbReference type="PDB" id="9ERJ">
    <property type="method" value="EM"/>
    <property type="resolution" value="2.90 A"/>
    <property type="chains" value="B=1-333"/>
</dbReference>
<dbReference type="PDB" id="9ERK">
    <property type="method" value="EM"/>
    <property type="resolution" value="2.80 A"/>
    <property type="chains" value="B=1-333"/>
</dbReference>
<dbReference type="PDB" id="9ERL">
    <property type="method" value="EM"/>
    <property type="resolution" value="3.00 A"/>
    <property type="chains" value="B=1-333"/>
</dbReference>
<dbReference type="PDBsum" id="9ERI"/>
<dbReference type="PDBsum" id="9ERJ"/>
<dbReference type="PDBsum" id="9ERK"/>
<dbReference type="PDBsum" id="9ERL"/>
<dbReference type="EMDB" id="EMD-19915"/>
<dbReference type="EMDB" id="EMD-19916"/>
<dbReference type="EMDB" id="EMD-19919"/>
<dbReference type="EMDB" id="EMD-19920"/>
<dbReference type="STRING" id="931626.Awo_c22010"/>
<dbReference type="TCDB" id="3.D.6.1.2">
    <property type="family name" value="the ion (h(+) or na(+))-translocating nadh:ferredoxin oxidoreductase (nfo or rnf) family"/>
</dbReference>
<dbReference type="KEGG" id="awo:Awo_c22010"/>
<dbReference type="eggNOG" id="COG1245">
    <property type="taxonomic scope" value="Bacteria"/>
</dbReference>
<dbReference type="eggNOG" id="COG2878">
    <property type="taxonomic scope" value="Bacteria"/>
</dbReference>
<dbReference type="HOGENOM" id="CLU_053470_0_0_9"/>
<dbReference type="OrthoDB" id="9789936at2"/>
<dbReference type="BioCyc" id="MetaCyc:MONOMER-21340"/>
<dbReference type="BRENDA" id="7.2.1.2">
    <property type="organism ID" value="52"/>
</dbReference>
<dbReference type="Proteomes" id="UP000007177">
    <property type="component" value="Chromosome"/>
</dbReference>
<dbReference type="GO" id="GO:0005886">
    <property type="term" value="C:plasma membrane"/>
    <property type="evidence" value="ECO:0007669"/>
    <property type="project" value="UniProtKB-SubCell"/>
</dbReference>
<dbReference type="GO" id="GO:0051539">
    <property type="term" value="F:4 iron, 4 sulfur cluster binding"/>
    <property type="evidence" value="ECO:0007669"/>
    <property type="project" value="UniProtKB-UniRule"/>
</dbReference>
<dbReference type="GO" id="GO:0009055">
    <property type="term" value="F:electron transfer activity"/>
    <property type="evidence" value="ECO:0007669"/>
    <property type="project" value="InterPro"/>
</dbReference>
<dbReference type="GO" id="GO:0046872">
    <property type="term" value="F:metal ion binding"/>
    <property type="evidence" value="ECO:0007669"/>
    <property type="project" value="UniProtKB-KW"/>
</dbReference>
<dbReference type="GO" id="GO:0022900">
    <property type="term" value="P:electron transport chain"/>
    <property type="evidence" value="ECO:0007669"/>
    <property type="project" value="UniProtKB-UniRule"/>
</dbReference>
<dbReference type="CDD" id="cd10549">
    <property type="entry name" value="MtMvhB_like"/>
    <property type="match status" value="2"/>
</dbReference>
<dbReference type="Gene3D" id="3.30.70.20">
    <property type="match status" value="3"/>
</dbReference>
<dbReference type="Gene3D" id="1.10.15.40">
    <property type="entry name" value="Electron transport complex subunit B, putative Fe-S cluster"/>
    <property type="match status" value="1"/>
</dbReference>
<dbReference type="HAMAP" id="MF_00463">
    <property type="entry name" value="RsxB_RnfB"/>
    <property type="match status" value="1"/>
</dbReference>
<dbReference type="InterPro" id="IPR007202">
    <property type="entry name" value="4Fe-4S_dom"/>
</dbReference>
<dbReference type="InterPro" id="IPR017896">
    <property type="entry name" value="4Fe4S_Fe-S-bd"/>
</dbReference>
<dbReference type="InterPro" id="IPR017900">
    <property type="entry name" value="4Fe4S_Fe_S_CS"/>
</dbReference>
<dbReference type="InterPro" id="IPR050395">
    <property type="entry name" value="4Fe4S_Ferredoxin_RnfB"/>
</dbReference>
<dbReference type="InterPro" id="IPR010207">
    <property type="entry name" value="Elect_transpt_cplx_RnfB/RsxB"/>
</dbReference>
<dbReference type="PANTHER" id="PTHR43560">
    <property type="entry name" value="ION-TRANSLOCATING OXIDOREDUCTASE COMPLEX SUBUNIT B"/>
    <property type="match status" value="1"/>
</dbReference>
<dbReference type="PANTHER" id="PTHR43560:SF1">
    <property type="entry name" value="ION-TRANSLOCATING OXIDOREDUCTASE COMPLEX SUBUNIT B"/>
    <property type="match status" value="1"/>
</dbReference>
<dbReference type="Pfam" id="PF00037">
    <property type="entry name" value="Fer4"/>
    <property type="match status" value="3"/>
</dbReference>
<dbReference type="Pfam" id="PF12838">
    <property type="entry name" value="Fer4_7"/>
    <property type="match status" value="1"/>
</dbReference>
<dbReference type="Pfam" id="PF04060">
    <property type="entry name" value="FeS"/>
    <property type="match status" value="1"/>
</dbReference>
<dbReference type="SUPFAM" id="SSF54862">
    <property type="entry name" value="4Fe-4S ferredoxins"/>
    <property type="match status" value="1"/>
</dbReference>
<dbReference type="PROSITE" id="PS51656">
    <property type="entry name" value="4FE4S"/>
    <property type="match status" value="1"/>
</dbReference>
<dbReference type="PROSITE" id="PS00198">
    <property type="entry name" value="4FE4S_FER_1"/>
    <property type="match status" value="3"/>
</dbReference>
<dbReference type="PROSITE" id="PS51379">
    <property type="entry name" value="4FE4S_FER_2"/>
    <property type="match status" value="6"/>
</dbReference>
<feature type="chain" id="PRO_0000443517" description="Na(+)-translocating ferredoxin:NAD(+) oxidoreductase complex subunit B">
    <location>
        <begin position="1"/>
        <end position="333"/>
    </location>
</feature>
<feature type="domain" description="4Fe-4S" evidence="1">
    <location>
        <begin position="33"/>
        <end position="92"/>
    </location>
</feature>
<feature type="domain" description="4Fe-4S ferredoxin-type 1" evidence="1">
    <location>
        <begin position="126"/>
        <end position="162"/>
    </location>
</feature>
<feature type="domain" description="4Fe-4S ferredoxin-type 2" evidence="1">
    <location>
        <begin position="163"/>
        <end position="192"/>
    </location>
</feature>
<feature type="domain" description="4Fe-4S ferredoxin-type 3" evidence="1">
    <location>
        <begin position="207"/>
        <end position="237"/>
    </location>
</feature>
<feature type="domain" description="4Fe-4S ferredoxin-type 4" evidence="1">
    <location>
        <begin position="239"/>
        <end position="266"/>
    </location>
</feature>
<feature type="domain" description="4Fe-4S ferredoxin-type 5" evidence="1">
    <location>
        <begin position="270"/>
        <end position="299"/>
    </location>
</feature>
<feature type="domain" description="4Fe-4S ferredoxin-type 6" evidence="1">
    <location>
        <begin position="301"/>
        <end position="330"/>
    </location>
</feature>
<feature type="region of interest" description="Hydrophobic" evidence="1">
    <location>
        <begin position="1"/>
        <end position="27"/>
    </location>
</feature>
<feature type="binding site" evidence="1">
    <location>
        <position position="50"/>
    </location>
    <ligand>
        <name>[4Fe-4S] cluster</name>
        <dbReference type="ChEBI" id="CHEBI:49883"/>
        <label>1</label>
    </ligand>
</feature>
<feature type="binding site" evidence="1">
    <location>
        <position position="53"/>
    </location>
    <ligand>
        <name>[4Fe-4S] cluster</name>
        <dbReference type="ChEBI" id="CHEBI:49883"/>
        <label>1</label>
    </ligand>
</feature>
<feature type="binding site" evidence="1">
    <location>
        <position position="58"/>
    </location>
    <ligand>
        <name>[4Fe-4S] cluster</name>
        <dbReference type="ChEBI" id="CHEBI:49883"/>
        <label>1</label>
    </ligand>
</feature>
<feature type="binding site" evidence="1">
    <location>
        <position position="75"/>
    </location>
    <ligand>
        <name>[4Fe-4S] cluster</name>
        <dbReference type="ChEBI" id="CHEBI:49883"/>
        <label>1</label>
    </ligand>
</feature>
<feature type="binding site" evidence="1">
    <location>
        <position position="138"/>
    </location>
    <ligand>
        <name>[4Fe-4S] cluster</name>
        <dbReference type="ChEBI" id="CHEBI:49883"/>
        <label>2</label>
    </ligand>
</feature>
<feature type="binding site" evidence="1">
    <location>
        <position position="142"/>
    </location>
    <ligand>
        <name>[4Fe-4S] cluster</name>
        <dbReference type="ChEBI" id="CHEBI:49883"/>
        <label>2</label>
    </ligand>
</feature>
<feature type="binding site" evidence="1">
    <location>
        <position position="148"/>
    </location>
    <ligand>
        <name>[4Fe-4S] cluster</name>
        <dbReference type="ChEBI" id="CHEBI:49883"/>
        <label>2</label>
    </ligand>
</feature>
<feature type="binding site" evidence="1">
    <location>
        <position position="152"/>
    </location>
    <ligand>
        <name>[4Fe-4S] cluster</name>
        <dbReference type="ChEBI" id="CHEBI:49883"/>
        <label>3</label>
    </ligand>
</feature>
<feature type="binding site" evidence="1">
    <location>
        <position position="172"/>
    </location>
    <ligand>
        <name>[4Fe-4S] cluster</name>
        <dbReference type="ChEBI" id="CHEBI:49883"/>
        <label>3</label>
    </ligand>
</feature>
<feature type="binding site" evidence="1">
    <location>
        <position position="175"/>
    </location>
    <ligand>
        <name>[4Fe-4S] cluster</name>
        <dbReference type="ChEBI" id="CHEBI:49883"/>
        <label>3</label>
    </ligand>
</feature>
<feature type="binding site" evidence="1">
    <location>
        <position position="178"/>
    </location>
    <ligand>
        <name>[4Fe-4S] cluster</name>
        <dbReference type="ChEBI" id="CHEBI:49883"/>
        <label>3</label>
    </ligand>
</feature>
<feature type="binding site" evidence="1">
    <location>
        <position position="182"/>
    </location>
    <ligand>
        <name>[4Fe-4S] cluster</name>
        <dbReference type="ChEBI" id="CHEBI:49883"/>
        <label>2</label>
    </ligand>
</feature>
<feature type="binding site" evidence="1">
    <location>
        <position position="217"/>
    </location>
    <ligand>
        <name>[4Fe-4S] cluster</name>
        <dbReference type="ChEBI" id="CHEBI:49883"/>
        <label>4</label>
    </ligand>
</feature>
<feature type="binding site" evidence="1">
    <location>
        <position position="220"/>
    </location>
    <ligand>
        <name>[4Fe-4S] cluster</name>
        <dbReference type="ChEBI" id="CHEBI:49883"/>
        <label>4</label>
    </ligand>
</feature>
<feature type="binding site" evidence="1">
    <location>
        <position position="223"/>
    </location>
    <ligand>
        <name>[4Fe-4S] cluster</name>
        <dbReference type="ChEBI" id="CHEBI:49883"/>
        <label>4</label>
    </ligand>
</feature>
<feature type="binding site" evidence="1">
    <location>
        <position position="227"/>
    </location>
    <ligand>
        <name>[4Fe-4S] cluster</name>
        <dbReference type="ChEBI" id="CHEBI:49883"/>
        <label>4</label>
    </ligand>
</feature>
<feature type="binding site" evidence="2">
    <location>
        <position position="246"/>
    </location>
    <ligand>
        <name>[4Fe-4S] cluster</name>
        <dbReference type="ChEBI" id="CHEBI:49883"/>
        <label>5</label>
    </ligand>
</feature>
<feature type="binding site" evidence="2">
    <location>
        <position position="249"/>
    </location>
    <ligand>
        <name>[4Fe-4S] cluster</name>
        <dbReference type="ChEBI" id="CHEBI:49883"/>
        <label>5</label>
    </ligand>
</feature>
<feature type="binding site" evidence="2">
    <location>
        <position position="252"/>
    </location>
    <ligand>
        <name>[4Fe-4S] cluster</name>
        <dbReference type="ChEBI" id="CHEBI:49883"/>
        <label>5</label>
    </ligand>
</feature>
<feature type="binding site" evidence="2">
    <location>
        <position position="256"/>
    </location>
    <ligand>
        <name>[4Fe-4S] cluster</name>
        <dbReference type="ChEBI" id="CHEBI:49883"/>
        <label>5</label>
    </ligand>
</feature>
<feature type="binding site" evidence="2">
    <location>
        <position position="279"/>
    </location>
    <ligand>
        <name>[4Fe-4S] cluster</name>
        <dbReference type="ChEBI" id="CHEBI:49883"/>
        <label>6</label>
    </ligand>
</feature>
<feature type="binding site" evidence="2">
    <location>
        <position position="282"/>
    </location>
    <ligand>
        <name>[4Fe-4S] cluster</name>
        <dbReference type="ChEBI" id="CHEBI:49883"/>
        <label>6</label>
    </ligand>
</feature>
<feature type="binding site" evidence="2">
    <location>
        <position position="285"/>
    </location>
    <ligand>
        <name>[4Fe-4S] cluster</name>
        <dbReference type="ChEBI" id="CHEBI:49883"/>
        <label>6</label>
    </ligand>
</feature>
<feature type="binding site" evidence="2">
    <location>
        <position position="289"/>
    </location>
    <ligand>
        <name>[4Fe-4S] cluster</name>
        <dbReference type="ChEBI" id="CHEBI:49883"/>
        <label>6</label>
    </ligand>
</feature>
<feature type="binding site" evidence="2">
    <location>
        <position position="310"/>
    </location>
    <ligand>
        <name>[4Fe-4S] cluster</name>
        <dbReference type="ChEBI" id="CHEBI:49883"/>
        <label>7</label>
    </ligand>
</feature>
<feature type="binding site" evidence="2">
    <location>
        <position position="313"/>
    </location>
    <ligand>
        <name>[4Fe-4S] cluster</name>
        <dbReference type="ChEBI" id="CHEBI:49883"/>
        <label>7</label>
    </ligand>
</feature>
<feature type="binding site" evidence="2">
    <location>
        <position position="316"/>
    </location>
    <ligand>
        <name>[4Fe-4S] cluster</name>
        <dbReference type="ChEBI" id="CHEBI:49883"/>
        <label>7</label>
    </ligand>
</feature>
<feature type="binding site" evidence="2">
    <location>
        <position position="320"/>
    </location>
    <ligand>
        <name>[4Fe-4S] cluster</name>
        <dbReference type="ChEBI" id="CHEBI:49883"/>
        <label>7</label>
    </ligand>
</feature>
<comment type="function">
    <text evidence="3 4">Part of a membrane-bound complex that couples electron transfer with translocation of ions across the membrane. Couples electron transfer from reduced ferredoxin to NAD(+) with electrogenic movement of Na(+) out of the cell. Involved in caffeate respiration.</text>
</comment>
<comment type="catalytic activity">
    <reaction evidence="3 4">
        <text>2 reduced [2Fe-2S]-[ferredoxin] + Na(+)(in) + NAD(+) + H(+) = 2 oxidized [2Fe-2S]-[ferredoxin] + Na(+)(out) + NADH</text>
        <dbReference type="Rhea" id="RHEA:46800"/>
        <dbReference type="Rhea" id="RHEA-COMP:10000"/>
        <dbReference type="Rhea" id="RHEA-COMP:10001"/>
        <dbReference type="ChEBI" id="CHEBI:15378"/>
        <dbReference type="ChEBI" id="CHEBI:29101"/>
        <dbReference type="ChEBI" id="CHEBI:33737"/>
        <dbReference type="ChEBI" id="CHEBI:33738"/>
        <dbReference type="ChEBI" id="CHEBI:57540"/>
        <dbReference type="ChEBI" id="CHEBI:57945"/>
        <dbReference type="EC" id="7.2.1.2"/>
    </reaction>
</comment>
<comment type="cofactor">
    <cofactor evidence="1">
        <name>[4Fe-4S] cluster</name>
        <dbReference type="ChEBI" id="CHEBI:49883"/>
    </cofactor>
    <text evidence="6">Binds 7 [4Fe-4S] clusters.</text>
</comment>
<comment type="subunit">
    <text evidence="1 7">The complex is composed of six subunits: RnfA, RnfB, RnfC, RnfD, RnfE and RnfG.</text>
</comment>
<comment type="subcellular location">
    <subcellularLocation>
        <location evidence="1">Cell membrane</location>
    </subcellularLocation>
</comment>
<comment type="similarity">
    <text evidence="1">Belongs to the 4Fe4S bacterial-type ferredoxin family. RnfB subfamily.</text>
</comment>
<organism>
    <name type="scientific">Acetobacterium woodii (strain ATCC 29683 / DSM 1030 / JCM 2381 / KCTC 1655 / WB1)</name>
    <dbReference type="NCBI Taxonomy" id="931626"/>
    <lineage>
        <taxon>Bacteria</taxon>
        <taxon>Bacillati</taxon>
        <taxon>Bacillota</taxon>
        <taxon>Clostridia</taxon>
        <taxon>Eubacteriales</taxon>
        <taxon>Eubacteriaceae</taxon>
        <taxon>Acetobacterium</taxon>
    </lineage>
</organism>
<protein>
    <recommendedName>
        <fullName evidence="6">Na(+)-translocating ferredoxin:NAD(+) oxidoreductase complex subunit B</fullName>
        <ecNumber evidence="3 4">7.2.1.2</ecNumber>
    </recommendedName>
    <alternativeName>
        <fullName evidence="1 6">Rnf electron transport complex subunit B</fullName>
    </alternativeName>
</protein>
<evidence type="ECO:0000255" key="1">
    <source>
        <dbReference type="HAMAP-Rule" id="MF_00463"/>
    </source>
</evidence>
<evidence type="ECO:0000255" key="2">
    <source>
        <dbReference type="PROSITE-ProRule" id="PRU00711"/>
    </source>
</evidence>
<evidence type="ECO:0000269" key="3">
    <source>
    </source>
</evidence>
<evidence type="ECO:0000269" key="4">
    <source>
    </source>
</evidence>
<evidence type="ECO:0000303" key="5">
    <source>
    </source>
</evidence>
<evidence type="ECO:0000305" key="6"/>
<evidence type="ECO:0000305" key="7">
    <source>
    </source>
</evidence>
<evidence type="ECO:0000312" key="8">
    <source>
        <dbReference type="EMBL" id="AFA48975.1"/>
    </source>
</evidence>
<gene>
    <name evidence="1 5" type="primary">rnfB</name>
    <name evidence="8" type="ordered locus">Awo_c22010</name>
</gene>
<sequence>MLNAILVPVGILGVFGLIFGIGLAIAAKVFEVYEDPRVPLVRAALPGANCGGCGLPGCDALAANIVGGSAAIDACPVGGASCAAAVAEIMGMEAGSAVKKVATVICQGTCETAPNRAEYYGEMDCREAMIASGGSKGCRYGCLGYGTCKAVCPFDAIVIGEDGLPKVDPEKCTSCGKCVEACPKSIMTLVPEAQEVIVKCHNFDKGKIARLSCTTACIACGACVKACRFDAITVENNCAKIDYDKCRQCYECVDKCPMNCISGDVEYGKSTAYIIEENCIACGLCAKNCPVNAITGEIKKPPYVIDHDMCIGCGICFDKCRKSAIEMRPNKTK</sequence>
<keyword id="KW-0002">3D-structure</keyword>
<keyword id="KW-0004">4Fe-4S</keyword>
<keyword id="KW-1003">Cell membrane</keyword>
<keyword id="KW-0249">Electron transport</keyword>
<keyword id="KW-0408">Iron</keyword>
<keyword id="KW-0411">Iron-sulfur</keyword>
<keyword id="KW-0472">Membrane</keyword>
<keyword id="KW-0479">Metal-binding</keyword>
<keyword id="KW-0520">NAD</keyword>
<keyword id="KW-1185">Reference proteome</keyword>
<keyword id="KW-0677">Repeat</keyword>
<keyword id="KW-1278">Translocase</keyword>
<keyword id="KW-0813">Transport</keyword>
<reference key="1">
    <citation type="journal article" date="2009" name="Environ. Microbiol.">
        <title>Genetic, immunological and biochemical evidence for a Rnf complex in the acetogen Acetobacterium woodii.</title>
        <authorList>
            <person name="Biegel E."/>
            <person name="Schmidt S."/>
            <person name="Muller V."/>
        </authorList>
    </citation>
    <scope>NUCLEOTIDE SEQUENCE [GENOMIC DNA]</scope>
    <source>
        <strain>ATCC 29683 / DSM 1030 / JCM 2381 / KCTC 1655 / WB1</strain>
    </source>
</reference>
<reference key="2">
    <citation type="submission" date="2011-07" db="EMBL/GenBank/DDBJ databases">
        <title>Complete genome sequence of Acetobacterium woodii.</title>
        <authorList>
            <person name="Poehlein A."/>
            <person name="Schmidt S."/>
            <person name="Kaster A.-K."/>
            <person name="Goenrich M."/>
            <person name="Vollmers J."/>
            <person name="Thuermer A."/>
            <person name="Gottschalk G."/>
            <person name="Thauer R.K."/>
            <person name="Daniel R."/>
            <person name="Mueller V."/>
        </authorList>
    </citation>
    <scope>NUCLEOTIDE SEQUENCE [LARGE SCALE GENOMIC DNA]</scope>
    <source>
        <strain>ATCC 29683 / DSM 1030 / JCM 2381 / KCTC 1655 / WB1</strain>
    </source>
</reference>
<reference key="3">
    <citation type="journal article" date="2010" name="Proc. Natl. Acad. Sci. U.S.A.">
        <title>Bacterial Na+-translocating ferredoxin:NAD+ oxidoreductase.</title>
        <authorList>
            <person name="Biegel E."/>
            <person name="Mueller V."/>
        </authorList>
    </citation>
    <scope>FUNCTION</scope>
    <scope>CATALYTIC ACTIVITY</scope>
    <scope>SUBUNIT</scope>
    <source>
        <strain>ATCC 29683 / DSM 1030 / JCM 2381 / KCTC 1655 / WB1</strain>
    </source>
</reference>
<reference key="4">
    <citation type="journal article" date="2013" name="J. Biol. Chem.">
        <title>The ferredoxin:NAD+ oxidoreductase (Rnf) from the acetogen Acetobacterium woodii requires Na+ and is reversibly coupled to the membrane potential.</title>
        <authorList>
            <person name="Hess V."/>
            <person name="Schuchmann K."/>
            <person name="Mueller V."/>
        </authorList>
    </citation>
    <scope>FUNCTION</scope>
    <scope>CATALYTIC ACTIVITY</scope>
    <source>
        <strain>ATCC 29683 / DSM 1030 / JCM 2381 / KCTC 1655 / WB1</strain>
    </source>
</reference>